<protein>
    <recommendedName>
        <fullName>Uncharacterized protein BSUIS_A0368</fullName>
    </recommendedName>
</protein>
<sequence length="342" mass="36941">MRSTKVIHIVGCHAEGEVGDVIVGGVAPPPGETVWEQSRFIANDETLRNFVLNEPRGGVFRHVNLLVPPKDPRAQMGFIIMEPADTPPMSGSNSICVSTVLLDSGIIAMQEPVTHMVLEAPGGIIEVEAECRNGKAERISVRNVPSFADRLDAPLDVTGLGTIMVDTAYGGDSFVIVDAAQIGMKIEPGQARELAEIGVKITKAANEQLGFRHPERDWRHISFCQITEPVTREGDVLTGVNTVAIRPAKLDRSPTGTGCSARMAVLHAKGQMKAGERFIGKSVLGTEFHCRLDKVLELGGKPAISPIISGRAWVTGTSQLMLDPSDPFPHGYRLSDTWPRDE</sequence>
<reference key="1">
    <citation type="submission" date="2007-12" db="EMBL/GenBank/DDBJ databases">
        <title>Brucella suis ATCC 23445 whole genome shotgun sequencing project.</title>
        <authorList>
            <person name="Setubal J.C."/>
            <person name="Bowns C."/>
            <person name="Boyle S."/>
            <person name="Crasta O.R."/>
            <person name="Czar M.J."/>
            <person name="Dharmanolla C."/>
            <person name="Gillespie J.J."/>
            <person name="Kenyon R.W."/>
            <person name="Lu J."/>
            <person name="Mane S."/>
            <person name="Mohapatra S."/>
            <person name="Nagrani S."/>
            <person name="Purkayastha A."/>
            <person name="Rajasimha H.K."/>
            <person name="Shallom J.M."/>
            <person name="Shallom S."/>
            <person name="Shukla M."/>
            <person name="Snyder E.E."/>
            <person name="Sobral B.W."/>
            <person name="Wattam A.R."/>
            <person name="Will R."/>
            <person name="Williams K."/>
            <person name="Yoo H."/>
            <person name="Bruce D."/>
            <person name="Detter C."/>
            <person name="Munk C."/>
            <person name="Brettin T.S."/>
        </authorList>
    </citation>
    <scope>NUCLEOTIDE SEQUENCE [LARGE SCALE GENOMIC DNA]</scope>
    <source>
        <strain>ATCC 23445 / NCTC 10510</strain>
    </source>
</reference>
<dbReference type="EMBL" id="CP000911">
    <property type="protein sequence ID" value="ABY37459.1"/>
    <property type="molecule type" value="Genomic_DNA"/>
</dbReference>
<dbReference type="RefSeq" id="WP_002966688.1">
    <property type="nucleotide sequence ID" value="NC_010169.1"/>
</dbReference>
<dbReference type="SMR" id="B0CJW8"/>
<dbReference type="KEGG" id="bmt:BSUIS_A0368"/>
<dbReference type="HOGENOM" id="CLU_036729_2_0_5"/>
<dbReference type="Proteomes" id="UP000008545">
    <property type="component" value="Chromosome I"/>
</dbReference>
<dbReference type="GO" id="GO:0047580">
    <property type="term" value="F:4-hydroxyproline epimerase activity"/>
    <property type="evidence" value="ECO:0007669"/>
    <property type="project" value="TreeGrafter"/>
</dbReference>
<dbReference type="GO" id="GO:0050346">
    <property type="term" value="F:trans-L-3-hydroxyproline dehydratase activity"/>
    <property type="evidence" value="ECO:0007669"/>
    <property type="project" value="UniProtKB-ARBA"/>
</dbReference>
<dbReference type="FunFam" id="3.10.310.10:FF:000010">
    <property type="entry name" value="Proline racemase"/>
    <property type="match status" value="1"/>
</dbReference>
<dbReference type="Gene3D" id="3.10.310.10">
    <property type="entry name" value="Diaminopimelate Epimerase, Chain A, domain 1"/>
    <property type="match status" value="2"/>
</dbReference>
<dbReference type="InterPro" id="IPR008794">
    <property type="entry name" value="Pro_racemase_fam"/>
</dbReference>
<dbReference type="NCBIfam" id="NF047722">
    <property type="entry name" value="T3LHypDht"/>
    <property type="match status" value="1"/>
</dbReference>
<dbReference type="PANTHER" id="PTHR33442:SF5">
    <property type="entry name" value="BIFUNCTIONAL TRANS-3-HYDROXY-L-PROLINE DEHYDRATASE_2-EPIMERASE"/>
    <property type="match status" value="1"/>
</dbReference>
<dbReference type="PANTHER" id="PTHR33442">
    <property type="entry name" value="TRANS-3-HYDROXY-L-PROLINE DEHYDRATASE"/>
    <property type="match status" value="1"/>
</dbReference>
<dbReference type="Pfam" id="PF05544">
    <property type="entry name" value="Pro_racemase"/>
    <property type="match status" value="1"/>
</dbReference>
<dbReference type="PIRSF" id="PIRSF029792">
    <property type="entry name" value="Pro_racemase"/>
    <property type="match status" value="1"/>
</dbReference>
<dbReference type="SFLD" id="SFLDS00028">
    <property type="entry name" value="Proline_Racemase"/>
    <property type="match status" value="1"/>
</dbReference>
<dbReference type="SUPFAM" id="SSF54506">
    <property type="entry name" value="Diaminopimelate epimerase-like"/>
    <property type="match status" value="1"/>
</dbReference>
<comment type="similarity">
    <text evidence="1">Belongs to the proline racemase family.</text>
</comment>
<accession>B0CJW8</accession>
<gene>
    <name type="ordered locus">BSUIS_A0368</name>
</gene>
<feature type="chain" id="PRO_0000354044" description="Uncharacterized protein BSUIS_A0368">
    <location>
        <begin position="1"/>
        <end position="342"/>
    </location>
</feature>
<organism>
    <name type="scientific">Brucella suis (strain ATCC 23445 / NCTC 10510)</name>
    <dbReference type="NCBI Taxonomy" id="470137"/>
    <lineage>
        <taxon>Bacteria</taxon>
        <taxon>Pseudomonadati</taxon>
        <taxon>Pseudomonadota</taxon>
        <taxon>Alphaproteobacteria</taxon>
        <taxon>Hyphomicrobiales</taxon>
        <taxon>Brucellaceae</taxon>
        <taxon>Brucella/Ochrobactrum group</taxon>
        <taxon>Brucella</taxon>
    </lineage>
</organism>
<name>Y368_BRUSI</name>
<proteinExistence type="inferred from homology"/>
<evidence type="ECO:0000305" key="1"/>